<proteinExistence type="evidence at protein level"/>
<protein>
    <recommendedName>
        <fullName evidence="1">Energy-coupling factor transporter ATP-binding protein EcfA2</fullName>
        <shortName evidence="1">ECF transporter A component EcfA2</shortName>
        <ecNumber evidence="1">7.-.-.-</ecNumber>
    </recommendedName>
</protein>
<dbReference type="EC" id="7.-.-.-" evidence="1"/>
<dbReference type="EMBL" id="AE008691">
    <property type="protein sequence ID" value="AAM25404.1"/>
    <property type="molecule type" value="Genomic_DNA"/>
</dbReference>
<dbReference type="RefSeq" id="WP_011026307.1">
    <property type="nucleotide sequence ID" value="NC_003869.1"/>
</dbReference>
<dbReference type="PDB" id="4MKI">
    <property type="method" value="X-ray"/>
    <property type="resolution" value="2.30 A"/>
    <property type="chains" value="A/B=1-286"/>
</dbReference>
<dbReference type="PDBsum" id="4MKI"/>
<dbReference type="SMR" id="Q8R7Y5"/>
<dbReference type="STRING" id="273068.TTE2260"/>
<dbReference type="KEGG" id="tte:TTE2260"/>
<dbReference type="eggNOG" id="COG1122">
    <property type="taxonomic scope" value="Bacteria"/>
</dbReference>
<dbReference type="HOGENOM" id="CLU_000604_1_22_9"/>
<dbReference type="OrthoDB" id="9814634at2"/>
<dbReference type="EvolutionaryTrace" id="Q8R7Y5"/>
<dbReference type="Proteomes" id="UP000000555">
    <property type="component" value="Chromosome"/>
</dbReference>
<dbReference type="GO" id="GO:0043190">
    <property type="term" value="C:ATP-binding cassette (ABC) transporter complex"/>
    <property type="evidence" value="ECO:0007669"/>
    <property type="project" value="TreeGrafter"/>
</dbReference>
<dbReference type="GO" id="GO:0005524">
    <property type="term" value="F:ATP binding"/>
    <property type="evidence" value="ECO:0007669"/>
    <property type="project" value="UniProtKB-KW"/>
</dbReference>
<dbReference type="GO" id="GO:0016887">
    <property type="term" value="F:ATP hydrolysis activity"/>
    <property type="evidence" value="ECO:0007669"/>
    <property type="project" value="InterPro"/>
</dbReference>
<dbReference type="GO" id="GO:0042626">
    <property type="term" value="F:ATPase-coupled transmembrane transporter activity"/>
    <property type="evidence" value="ECO:0007669"/>
    <property type="project" value="TreeGrafter"/>
</dbReference>
<dbReference type="CDD" id="cd03225">
    <property type="entry name" value="ABC_cobalt_CbiO_domain1"/>
    <property type="match status" value="1"/>
</dbReference>
<dbReference type="FunFam" id="3.40.50.300:FF:000224">
    <property type="entry name" value="Energy-coupling factor transporter ATP-binding protein EcfA"/>
    <property type="match status" value="1"/>
</dbReference>
<dbReference type="Gene3D" id="3.40.50.300">
    <property type="entry name" value="P-loop containing nucleotide triphosphate hydrolases"/>
    <property type="match status" value="1"/>
</dbReference>
<dbReference type="InterPro" id="IPR003593">
    <property type="entry name" value="AAA+_ATPase"/>
</dbReference>
<dbReference type="InterPro" id="IPR003439">
    <property type="entry name" value="ABC_transporter-like_ATP-bd"/>
</dbReference>
<dbReference type="InterPro" id="IPR017871">
    <property type="entry name" value="ABC_transporter-like_CS"/>
</dbReference>
<dbReference type="InterPro" id="IPR015856">
    <property type="entry name" value="ABC_transpr_CbiO/EcfA_su"/>
</dbReference>
<dbReference type="InterPro" id="IPR050095">
    <property type="entry name" value="ECF_ABC_transporter_ATP-bd"/>
</dbReference>
<dbReference type="InterPro" id="IPR030946">
    <property type="entry name" value="EcfA2"/>
</dbReference>
<dbReference type="InterPro" id="IPR030947">
    <property type="entry name" value="EcfA_1"/>
</dbReference>
<dbReference type="InterPro" id="IPR027417">
    <property type="entry name" value="P-loop_NTPase"/>
</dbReference>
<dbReference type="NCBIfam" id="TIGR04520">
    <property type="entry name" value="ECF_ATPase_1"/>
    <property type="match status" value="1"/>
</dbReference>
<dbReference type="NCBIfam" id="TIGR04521">
    <property type="entry name" value="ECF_ATPase_2"/>
    <property type="match status" value="1"/>
</dbReference>
<dbReference type="NCBIfam" id="NF010158">
    <property type="entry name" value="PRK13637.1"/>
    <property type="match status" value="1"/>
</dbReference>
<dbReference type="PANTHER" id="PTHR43553:SF27">
    <property type="entry name" value="ENERGY-COUPLING FACTOR TRANSPORTER ATP-BINDING PROTEIN ECFA2"/>
    <property type="match status" value="1"/>
</dbReference>
<dbReference type="PANTHER" id="PTHR43553">
    <property type="entry name" value="HEAVY METAL TRANSPORTER"/>
    <property type="match status" value="1"/>
</dbReference>
<dbReference type="Pfam" id="PF00005">
    <property type="entry name" value="ABC_tran"/>
    <property type="match status" value="1"/>
</dbReference>
<dbReference type="SMART" id="SM00382">
    <property type="entry name" value="AAA"/>
    <property type="match status" value="1"/>
</dbReference>
<dbReference type="SUPFAM" id="SSF52540">
    <property type="entry name" value="P-loop containing nucleoside triphosphate hydrolases"/>
    <property type="match status" value="1"/>
</dbReference>
<dbReference type="PROSITE" id="PS00211">
    <property type="entry name" value="ABC_TRANSPORTER_1"/>
    <property type="match status" value="1"/>
</dbReference>
<dbReference type="PROSITE" id="PS50893">
    <property type="entry name" value="ABC_TRANSPORTER_2"/>
    <property type="match status" value="1"/>
</dbReference>
<dbReference type="PROSITE" id="PS51246">
    <property type="entry name" value="CBIO"/>
    <property type="match status" value="1"/>
</dbReference>
<name>ECFA2_CALS4</name>
<evidence type="ECO:0000255" key="1">
    <source>
        <dbReference type="HAMAP-Rule" id="MF_01710"/>
    </source>
</evidence>
<evidence type="ECO:0007829" key="2">
    <source>
        <dbReference type="PDB" id="4MKI"/>
    </source>
</evidence>
<keyword id="KW-0002">3D-structure</keyword>
<keyword id="KW-0067">ATP-binding</keyword>
<keyword id="KW-1003">Cell membrane</keyword>
<keyword id="KW-0472">Membrane</keyword>
<keyword id="KW-0547">Nucleotide-binding</keyword>
<keyword id="KW-1185">Reference proteome</keyword>
<keyword id="KW-1278">Translocase</keyword>
<keyword id="KW-0813">Transport</keyword>
<comment type="function">
    <text evidence="1">ATP-binding (A) component of a common energy-coupling factor (ECF) ABC-transporter complex. Unlike classic ABC transporters this ECF transporter provides the energy necessary to transport a number of different substrates.</text>
</comment>
<comment type="subunit">
    <text evidence="1">Forms a stable energy-coupling factor (ECF) transporter complex composed of 2 membrane-embedded substrate-binding proteins (S component), 2 ATP-binding proteins (A component) and 2 transmembrane proteins (T component).</text>
</comment>
<comment type="subcellular location">
    <subcellularLocation>
        <location evidence="1">Cell membrane</location>
        <topology evidence="1">Peripheral membrane protein</topology>
    </subcellularLocation>
</comment>
<comment type="similarity">
    <text evidence="1">Belongs to the ABC transporter superfamily. Energy-coupling factor EcfA family.</text>
</comment>
<feature type="chain" id="PRO_0000092117" description="Energy-coupling factor transporter ATP-binding protein EcfA2">
    <location>
        <begin position="1"/>
        <end position="286"/>
    </location>
</feature>
<feature type="domain" description="ABC transporter" evidence="1">
    <location>
        <begin position="3"/>
        <end position="244"/>
    </location>
</feature>
<feature type="binding site" evidence="1">
    <location>
        <begin position="40"/>
        <end position="47"/>
    </location>
    <ligand>
        <name>ATP</name>
        <dbReference type="ChEBI" id="CHEBI:30616"/>
    </ligand>
</feature>
<feature type="strand" evidence="2">
    <location>
        <begin position="3"/>
        <end position="12"/>
    </location>
</feature>
<feature type="strand" evidence="2">
    <location>
        <begin position="20"/>
        <end position="30"/>
    </location>
</feature>
<feature type="strand" evidence="2">
    <location>
        <begin position="35"/>
        <end position="40"/>
    </location>
</feature>
<feature type="helix" evidence="2">
    <location>
        <begin position="46"/>
        <end position="53"/>
    </location>
</feature>
<feature type="strand" evidence="2">
    <location>
        <begin position="60"/>
        <end position="66"/>
    </location>
</feature>
<feature type="helix" evidence="2">
    <location>
        <begin position="78"/>
        <end position="82"/>
    </location>
</feature>
<feature type="strand" evidence="2">
    <location>
        <begin position="85"/>
        <end position="88"/>
    </location>
</feature>
<feature type="helix" evidence="2">
    <location>
        <begin position="92"/>
        <end position="94"/>
    </location>
</feature>
<feature type="helix" evidence="2">
    <location>
        <begin position="101"/>
        <end position="111"/>
    </location>
</feature>
<feature type="helix" evidence="2">
    <location>
        <begin position="116"/>
        <end position="129"/>
    </location>
</feature>
<feature type="helix" evidence="2">
    <location>
        <begin position="134"/>
        <end position="136"/>
    </location>
</feature>
<feature type="helix" evidence="2">
    <location>
        <begin position="141"/>
        <end position="143"/>
    </location>
</feature>
<feature type="helix" evidence="2">
    <location>
        <begin position="146"/>
        <end position="158"/>
    </location>
</feature>
<feature type="strand" evidence="2">
    <location>
        <begin position="163"/>
        <end position="169"/>
    </location>
</feature>
<feature type="turn" evidence="2">
    <location>
        <begin position="170"/>
        <end position="173"/>
    </location>
</feature>
<feature type="helix" evidence="2">
    <location>
        <begin position="176"/>
        <end position="193"/>
    </location>
</feature>
<feature type="strand" evidence="2">
    <location>
        <begin position="196"/>
        <end position="200"/>
    </location>
</feature>
<feature type="helix" evidence="2">
    <location>
        <begin position="204"/>
        <end position="210"/>
    </location>
</feature>
<feature type="strand" evidence="2">
    <location>
        <begin position="212"/>
        <end position="218"/>
    </location>
</feature>
<feature type="strand" evidence="2">
    <location>
        <begin position="221"/>
        <end position="226"/>
    </location>
</feature>
<feature type="helix" evidence="2">
    <location>
        <begin position="228"/>
        <end position="232"/>
    </location>
</feature>
<feature type="helix" evidence="2">
    <location>
        <begin position="235"/>
        <end position="240"/>
    </location>
</feature>
<feature type="helix" evidence="2">
    <location>
        <begin position="247"/>
        <end position="257"/>
    </location>
</feature>
<feature type="helix" evidence="2">
    <location>
        <begin position="269"/>
        <end position="282"/>
    </location>
</feature>
<gene>
    <name evidence="1" type="primary">ecfA2</name>
    <name type="synonym">cbiO2</name>
    <name type="ordered locus">TTE2260</name>
</gene>
<accession>Q8R7Y5</accession>
<sequence>MPIKVENVSFIYNEGTPYATVALKDINFSIDDEEFVGIIGHTGSGKSTLIQQLNGLLKPSKGKIYINGIDITDKKVSLKDIRKQVGLVFQYPEYQLFEETVFKDIAFGPSNLGLSEEEVKERVYEAMEIVGISKELADKSPFELSGGQKRRVAIAGILAMRPKILILDEPTAGLDPKGKQEILNKIKEIHDKYKMITILVSHNMEDIARIADKIIVMNRGKIELIGTPREVFREAERLEKIGLSVPQITSLARELRKRGVPIPPDVLTIEEAKEHILRYLRGTKNV</sequence>
<organism>
    <name type="scientific">Caldanaerobacter subterraneus subsp. tengcongensis (strain DSM 15242 / JCM 11007 / NBRC 100824 / MB4)</name>
    <name type="common">Thermoanaerobacter tengcongensis</name>
    <dbReference type="NCBI Taxonomy" id="273068"/>
    <lineage>
        <taxon>Bacteria</taxon>
        <taxon>Bacillati</taxon>
        <taxon>Bacillota</taxon>
        <taxon>Clostridia</taxon>
        <taxon>Thermoanaerobacterales</taxon>
        <taxon>Thermoanaerobacteraceae</taxon>
        <taxon>Caldanaerobacter</taxon>
    </lineage>
</organism>
<reference key="1">
    <citation type="journal article" date="2002" name="Genome Res.">
        <title>A complete sequence of the T. tengcongensis genome.</title>
        <authorList>
            <person name="Bao Q."/>
            <person name="Tian Y."/>
            <person name="Li W."/>
            <person name="Xu Z."/>
            <person name="Xuan Z."/>
            <person name="Hu S."/>
            <person name="Dong W."/>
            <person name="Yang J."/>
            <person name="Chen Y."/>
            <person name="Xue Y."/>
            <person name="Xu Y."/>
            <person name="Lai X."/>
            <person name="Huang L."/>
            <person name="Dong X."/>
            <person name="Ma Y."/>
            <person name="Ling L."/>
            <person name="Tan H."/>
            <person name="Chen R."/>
            <person name="Wang J."/>
            <person name="Yu J."/>
            <person name="Yang H."/>
        </authorList>
    </citation>
    <scope>NUCLEOTIDE SEQUENCE [LARGE SCALE GENOMIC DNA]</scope>
    <source>
        <strain>DSM 15242 / JCM 11007 / NBRC 100824 / MB4</strain>
    </source>
</reference>